<accession>P17109</accession>
<accession>P76478</accession>
<accession>P78180</accession>
<accession>P78181</accession>
<feature type="chain" id="PRO_0000090829" description="2-succinyl-5-enolpyruvyl-6-hydroxy-3-cyclohexene-1-carboxylate synthase">
    <location>
        <begin position="1"/>
        <end position="556"/>
    </location>
</feature>
<feature type="mutagenesis site" description="Loss of activity." evidence="3">
    <original>E</original>
    <variation>Q</variation>
    <location>
        <position position="55"/>
    </location>
</feature>
<feature type="sequence conflict" description="In Ref. 5; AAA24153." evidence="6" ref="5">
    <location>
        <position position="42"/>
    </location>
</feature>
<feature type="sequence conflict" description="In Ref. 5; AAA24153." evidence="6" ref="5">
    <original>GVHINCPFAEPLYGEMDDTGL</original>
    <variation>ESISTARLLNRCMAKWTIPGF</variation>
    <location>
        <begin position="163"/>
        <end position="183"/>
    </location>
</feature>
<feature type="sequence conflict" description="In Ref. 5; AAA24153." evidence="6" ref="5">
    <location>
        <position position="398"/>
    </location>
</feature>
<feature type="sequence conflict" description="In Ref. 6; AAB59060." evidence="6" ref="6">
    <original>AQTLQQLLAQVSHL</original>
    <variation>RKRSSNFWRR</variation>
    <location>
        <begin position="543"/>
        <end position="556"/>
    </location>
</feature>
<feature type="helix" evidence="10">
    <location>
        <begin position="3"/>
        <end position="19"/>
    </location>
</feature>
<feature type="turn" evidence="10">
    <location>
        <begin position="20"/>
        <end position="22"/>
    </location>
</feature>
<feature type="strand" evidence="10">
    <location>
        <begin position="25"/>
        <end position="28"/>
    </location>
</feature>
<feature type="turn" evidence="9">
    <location>
        <begin position="32"/>
        <end position="34"/>
    </location>
</feature>
<feature type="helix" evidence="10">
    <location>
        <begin position="35"/>
        <end position="43"/>
    </location>
</feature>
<feature type="strand" evidence="10">
    <location>
        <begin position="48"/>
        <end position="51"/>
    </location>
</feature>
<feature type="helix" evidence="10">
    <location>
        <begin position="55"/>
        <end position="69"/>
    </location>
</feature>
<feature type="strand" evidence="10">
    <location>
        <begin position="73"/>
        <end position="77"/>
    </location>
</feature>
<feature type="helix" evidence="10">
    <location>
        <begin position="81"/>
        <end position="84"/>
    </location>
</feature>
<feature type="helix" evidence="10">
    <location>
        <begin position="87"/>
        <end position="96"/>
    </location>
</feature>
<feature type="strand" evidence="10">
    <location>
        <begin position="100"/>
        <end position="106"/>
    </location>
</feature>
<feature type="helix" evidence="10">
    <location>
        <begin position="109"/>
        <end position="111"/>
    </location>
</feature>
<feature type="strand" evidence="10">
    <location>
        <begin position="112"/>
        <end position="114"/>
    </location>
</feature>
<feature type="turn" evidence="10">
    <location>
        <begin position="123"/>
        <end position="128"/>
    </location>
</feature>
<feature type="strand" evidence="10">
    <location>
        <begin position="130"/>
        <end position="135"/>
    </location>
</feature>
<feature type="helix" evidence="10">
    <location>
        <begin position="145"/>
        <end position="157"/>
    </location>
</feature>
<feature type="strand" evidence="10">
    <location>
        <begin position="164"/>
        <end position="169"/>
    </location>
</feature>
<feature type="helix" evidence="10">
    <location>
        <begin position="183"/>
        <end position="187"/>
    </location>
</feature>
<feature type="helix" evidence="10">
    <location>
        <begin position="188"/>
        <end position="194"/>
    </location>
</feature>
<feature type="strand" evidence="10">
    <location>
        <begin position="199"/>
        <end position="201"/>
    </location>
</feature>
<feature type="strand" evidence="10">
    <location>
        <begin position="205"/>
        <end position="207"/>
    </location>
</feature>
<feature type="helix" evidence="10">
    <location>
        <begin position="214"/>
        <end position="217"/>
    </location>
</feature>
<feature type="strand" evidence="10">
    <location>
        <begin position="222"/>
        <end position="226"/>
    </location>
</feature>
<feature type="helix" evidence="10">
    <location>
        <begin position="231"/>
        <end position="244"/>
    </location>
</feature>
<feature type="strand" evidence="10">
    <location>
        <begin position="248"/>
        <end position="250"/>
    </location>
</feature>
<feature type="turn" evidence="10">
    <location>
        <begin position="252"/>
        <end position="254"/>
    </location>
</feature>
<feature type="helix" evidence="10">
    <location>
        <begin position="263"/>
        <end position="266"/>
    </location>
</feature>
<feature type="helix" evidence="10">
    <location>
        <begin position="270"/>
        <end position="276"/>
    </location>
</feature>
<feature type="strand" evidence="10">
    <location>
        <begin position="280"/>
        <end position="287"/>
    </location>
</feature>
<feature type="helix" evidence="10">
    <location>
        <begin position="292"/>
        <end position="300"/>
    </location>
</feature>
<feature type="strand" evidence="10">
    <location>
        <begin position="304"/>
        <end position="312"/>
    </location>
</feature>
<feature type="strand" evidence="10">
    <location>
        <begin position="322"/>
        <end position="328"/>
    </location>
</feature>
<feature type="helix" evidence="10">
    <location>
        <begin position="330"/>
        <end position="336"/>
    </location>
</feature>
<feature type="helix" evidence="10">
    <location>
        <begin position="349"/>
        <end position="361"/>
    </location>
</feature>
<feature type="turn" evidence="8">
    <location>
        <begin position="362"/>
        <end position="365"/>
    </location>
</feature>
<feature type="strand" evidence="11">
    <location>
        <begin position="366"/>
        <end position="368"/>
    </location>
</feature>
<feature type="helix" evidence="10">
    <location>
        <begin position="369"/>
        <end position="374"/>
    </location>
</feature>
<feature type="helix" evidence="10">
    <location>
        <begin position="376"/>
        <end position="379"/>
    </location>
</feature>
<feature type="strand" evidence="10">
    <location>
        <begin position="385"/>
        <end position="388"/>
    </location>
</feature>
<feature type="helix" evidence="10">
    <location>
        <begin position="392"/>
        <end position="400"/>
    </location>
</feature>
<feature type="strand" evidence="8">
    <location>
        <begin position="409"/>
        <end position="411"/>
    </location>
</feature>
<feature type="strand" evidence="10">
    <location>
        <begin position="418"/>
        <end position="420"/>
    </location>
</feature>
<feature type="helix" evidence="10">
    <location>
        <begin position="421"/>
        <end position="432"/>
    </location>
</feature>
<feature type="strand" evidence="10">
    <location>
        <begin position="436"/>
        <end position="441"/>
    </location>
</feature>
<feature type="helix" evidence="10">
    <location>
        <begin position="442"/>
        <end position="447"/>
    </location>
</feature>
<feature type="helix" evidence="10">
    <location>
        <begin position="449"/>
        <end position="456"/>
    </location>
</feature>
<feature type="strand" evidence="10">
    <location>
        <begin position="462"/>
        <end position="468"/>
    </location>
</feature>
<feature type="helix" evidence="10">
    <location>
        <begin position="474"/>
        <end position="477"/>
    </location>
</feature>
<feature type="helix" evidence="10">
    <location>
        <begin position="482"/>
        <end position="488"/>
    </location>
</feature>
<feature type="helix" evidence="10">
    <location>
        <begin position="498"/>
        <end position="503"/>
    </location>
</feature>
<feature type="strand" evidence="10">
    <location>
        <begin position="507"/>
        <end position="509"/>
    </location>
</feature>
<feature type="helix" evidence="10">
    <location>
        <begin position="514"/>
        <end position="524"/>
    </location>
</feature>
<feature type="strand" evidence="10">
    <location>
        <begin position="527"/>
        <end position="536"/>
    </location>
</feature>
<feature type="helix" evidence="10">
    <location>
        <begin position="541"/>
        <end position="554"/>
    </location>
</feature>
<organism>
    <name type="scientific">Escherichia coli (strain K12)</name>
    <dbReference type="NCBI Taxonomy" id="83333"/>
    <lineage>
        <taxon>Bacteria</taxon>
        <taxon>Pseudomonadati</taxon>
        <taxon>Pseudomonadota</taxon>
        <taxon>Gammaproteobacteria</taxon>
        <taxon>Enterobacterales</taxon>
        <taxon>Enterobacteriaceae</taxon>
        <taxon>Escherichia</taxon>
    </lineage>
</organism>
<dbReference type="EC" id="2.2.1.9" evidence="1"/>
<dbReference type="EMBL" id="U54790">
    <property type="protein sequence ID" value="AAC44304.1"/>
    <property type="molecule type" value="Genomic_DNA"/>
</dbReference>
<dbReference type="EMBL" id="U00096">
    <property type="protein sequence ID" value="AAC75324.1"/>
    <property type="molecule type" value="Genomic_DNA"/>
</dbReference>
<dbReference type="EMBL" id="AP009048">
    <property type="protein sequence ID" value="BAA16089.2"/>
    <property type="molecule type" value="Genomic_DNA"/>
</dbReference>
<dbReference type="EMBL" id="M21787">
    <property type="protein sequence ID" value="AAA24153.1"/>
    <property type="status" value="ALT_FRAME"/>
    <property type="molecule type" value="Genomic_DNA"/>
</dbReference>
<dbReference type="EMBL" id="L04464">
    <property type="protein sequence ID" value="AAB59060.1"/>
    <property type="molecule type" value="Genomic_DNA"/>
</dbReference>
<dbReference type="EMBL" id="L35030">
    <property type="protein sequence ID" value="AAA24150.1"/>
    <property type="molecule type" value="Genomic_DNA"/>
</dbReference>
<dbReference type="PIR" id="F64997">
    <property type="entry name" value="F64997"/>
</dbReference>
<dbReference type="RefSeq" id="NP_416767.1">
    <property type="nucleotide sequence ID" value="NC_000913.3"/>
</dbReference>
<dbReference type="RefSeq" id="WP_001295284.1">
    <property type="nucleotide sequence ID" value="NZ_STEB01000008.1"/>
</dbReference>
<dbReference type="PDB" id="2JLA">
    <property type="method" value="X-ray"/>
    <property type="resolution" value="2.81 A"/>
    <property type="chains" value="A/B/C/D=1-556"/>
</dbReference>
<dbReference type="PDB" id="2JLC">
    <property type="method" value="X-ray"/>
    <property type="resolution" value="2.50 A"/>
    <property type="chains" value="A/B=1-556"/>
</dbReference>
<dbReference type="PDB" id="3FLM">
    <property type="method" value="X-ray"/>
    <property type="resolution" value="2.70 A"/>
    <property type="chains" value="A/B=1-556"/>
</dbReference>
<dbReference type="PDB" id="3HWW">
    <property type="method" value="X-ray"/>
    <property type="resolution" value="1.95 A"/>
    <property type="chains" value="A/D=1-556"/>
</dbReference>
<dbReference type="PDB" id="3HWX">
    <property type="method" value="X-ray"/>
    <property type="resolution" value="2.60 A"/>
    <property type="chains" value="1/A/B/I/J/R/S/Z=1-556"/>
</dbReference>
<dbReference type="PDB" id="5EJ4">
    <property type="method" value="X-ray"/>
    <property type="resolution" value="1.77 A"/>
    <property type="chains" value="A/B/C/D/E/F/G/H=1-556"/>
</dbReference>
<dbReference type="PDB" id="5EJ5">
    <property type="method" value="X-ray"/>
    <property type="resolution" value="2.30 A"/>
    <property type="chains" value="A/B/C/D/E/F/G/H=1-556"/>
</dbReference>
<dbReference type="PDB" id="5EJ6">
    <property type="method" value="X-ray"/>
    <property type="resolution" value="2.24 A"/>
    <property type="chains" value="A/B/C/D/E/F/G/H=1-556"/>
</dbReference>
<dbReference type="PDB" id="5EJ7">
    <property type="method" value="X-ray"/>
    <property type="resolution" value="1.56 A"/>
    <property type="chains" value="A/B/C/D/E/F/G/H=1-556"/>
</dbReference>
<dbReference type="PDB" id="5EJ8">
    <property type="method" value="X-ray"/>
    <property type="resolution" value="1.34 A"/>
    <property type="chains" value="A/B/C/D/E/F/G/H=1-556"/>
</dbReference>
<dbReference type="PDB" id="5EJ9">
    <property type="method" value="X-ray"/>
    <property type="resolution" value="1.72 A"/>
    <property type="chains" value="A/B/C/D/E/F/G/H=1-556"/>
</dbReference>
<dbReference type="PDB" id="5EJA">
    <property type="method" value="X-ray"/>
    <property type="resolution" value="1.60 A"/>
    <property type="chains" value="A/B/C/D/E/F/G/H=1-556"/>
</dbReference>
<dbReference type="PDB" id="5EJM">
    <property type="method" value="X-ray"/>
    <property type="resolution" value="1.72 A"/>
    <property type="chains" value="A/B/C/D/E/F/G/H=1-556"/>
</dbReference>
<dbReference type="PDB" id="5Z2P">
    <property type="method" value="X-ray"/>
    <property type="resolution" value="2.30 A"/>
    <property type="chains" value="A/B/C/D/E/F/G/H=1-556"/>
</dbReference>
<dbReference type="PDB" id="5Z2R">
    <property type="method" value="X-ray"/>
    <property type="resolution" value="2.30 A"/>
    <property type="chains" value="A/B/C/D/E/F/G/H=1-556"/>
</dbReference>
<dbReference type="PDB" id="5Z2U">
    <property type="method" value="X-ray"/>
    <property type="resolution" value="2.35 A"/>
    <property type="chains" value="A/B/C/D/E/F/G/H=1-556"/>
</dbReference>
<dbReference type="PDBsum" id="2JLA"/>
<dbReference type="PDBsum" id="2JLC"/>
<dbReference type="PDBsum" id="3FLM"/>
<dbReference type="PDBsum" id="3HWW"/>
<dbReference type="PDBsum" id="3HWX"/>
<dbReference type="PDBsum" id="5EJ4"/>
<dbReference type="PDBsum" id="5EJ5"/>
<dbReference type="PDBsum" id="5EJ6"/>
<dbReference type="PDBsum" id="5EJ7"/>
<dbReference type="PDBsum" id="5EJ8"/>
<dbReference type="PDBsum" id="5EJ9"/>
<dbReference type="PDBsum" id="5EJA"/>
<dbReference type="PDBsum" id="5EJM"/>
<dbReference type="PDBsum" id="5Z2P"/>
<dbReference type="PDBsum" id="5Z2R"/>
<dbReference type="PDBsum" id="5Z2U"/>
<dbReference type="SMR" id="P17109"/>
<dbReference type="BioGRID" id="4260506">
    <property type="interactions" value="12"/>
</dbReference>
<dbReference type="BioGRID" id="851061">
    <property type="interactions" value="2"/>
</dbReference>
<dbReference type="DIP" id="DIP-10185N"/>
<dbReference type="FunCoup" id="P17109">
    <property type="interactions" value="185"/>
</dbReference>
<dbReference type="IntAct" id="P17109">
    <property type="interactions" value="1"/>
</dbReference>
<dbReference type="STRING" id="511145.b2264"/>
<dbReference type="jPOST" id="P17109"/>
<dbReference type="PaxDb" id="511145-b2264"/>
<dbReference type="EnsemblBacteria" id="AAC75324">
    <property type="protein sequence ID" value="AAC75324"/>
    <property type="gene ID" value="b2264"/>
</dbReference>
<dbReference type="GeneID" id="946720"/>
<dbReference type="KEGG" id="ecj:JW5374"/>
<dbReference type="KEGG" id="eco:b2264"/>
<dbReference type="KEGG" id="ecoc:C3026_12645"/>
<dbReference type="PATRIC" id="fig|511145.12.peg.2357"/>
<dbReference type="EchoBASE" id="EB0574"/>
<dbReference type="eggNOG" id="COG1165">
    <property type="taxonomic scope" value="Bacteria"/>
</dbReference>
<dbReference type="HOGENOM" id="CLU_006051_3_0_6"/>
<dbReference type="InParanoid" id="P17109"/>
<dbReference type="OMA" id="YDSNALW"/>
<dbReference type="OrthoDB" id="9791859at2"/>
<dbReference type="PhylomeDB" id="P17109"/>
<dbReference type="BioCyc" id="EcoCyc:MEND-MONOMER"/>
<dbReference type="BioCyc" id="MetaCyc:MEND-MONOMER"/>
<dbReference type="BRENDA" id="2.2.1.9">
    <property type="organism ID" value="2026"/>
</dbReference>
<dbReference type="SABIO-RK" id="P17109"/>
<dbReference type="UniPathway" id="UPA00079"/>
<dbReference type="UniPathway" id="UPA01057">
    <property type="reaction ID" value="UER00164"/>
</dbReference>
<dbReference type="EvolutionaryTrace" id="P17109"/>
<dbReference type="PRO" id="PR:P17109"/>
<dbReference type="Proteomes" id="UP000000625">
    <property type="component" value="Chromosome"/>
</dbReference>
<dbReference type="GO" id="GO:0070204">
    <property type="term" value="F:2-succinyl-5-enolpyruvyl-6-hydroxy-3-cyclohexene-1-carboxylic-acid synthase activity"/>
    <property type="evidence" value="ECO:0000314"/>
    <property type="project" value="EcoCyc"/>
</dbReference>
<dbReference type="GO" id="GO:0000287">
    <property type="term" value="F:magnesium ion binding"/>
    <property type="evidence" value="ECO:0000314"/>
    <property type="project" value="EcoCyc"/>
</dbReference>
<dbReference type="GO" id="GO:0030145">
    <property type="term" value="F:manganese ion binding"/>
    <property type="evidence" value="ECO:0007669"/>
    <property type="project" value="UniProtKB-UniRule"/>
</dbReference>
<dbReference type="GO" id="GO:0042803">
    <property type="term" value="F:protein homodimerization activity"/>
    <property type="evidence" value="ECO:0000314"/>
    <property type="project" value="EcoCyc"/>
</dbReference>
<dbReference type="GO" id="GO:0030976">
    <property type="term" value="F:thiamine pyrophosphate binding"/>
    <property type="evidence" value="ECO:0000314"/>
    <property type="project" value="EcoCyc"/>
</dbReference>
<dbReference type="GO" id="GO:0009234">
    <property type="term" value="P:menaquinone biosynthetic process"/>
    <property type="evidence" value="ECO:0000315"/>
    <property type="project" value="EcoCyc"/>
</dbReference>
<dbReference type="CDD" id="cd07037">
    <property type="entry name" value="TPP_PYR_MenD"/>
    <property type="match status" value="1"/>
</dbReference>
<dbReference type="CDD" id="cd02009">
    <property type="entry name" value="TPP_SHCHC_synthase"/>
    <property type="match status" value="1"/>
</dbReference>
<dbReference type="DisProt" id="DP02750"/>
<dbReference type="FunFam" id="3.40.50.1220:FF:000010">
    <property type="entry name" value="2-succinyl-5-enolpyruvyl-6-hydroxy-3-cyclohexene-1-carboxylate synthase"/>
    <property type="match status" value="1"/>
</dbReference>
<dbReference type="FunFam" id="3.40.50.970:FF:000029">
    <property type="entry name" value="2-succinyl-5-enolpyruvyl-6-hydroxy-3-cyclohexene-1-carboxylate synthase"/>
    <property type="match status" value="1"/>
</dbReference>
<dbReference type="FunFam" id="3.40.50.970:FF:000035">
    <property type="entry name" value="2-succinyl-5-enolpyruvyl-6-hydroxy-3-cyclohexene-1-carboxylate synthase"/>
    <property type="match status" value="1"/>
</dbReference>
<dbReference type="Gene3D" id="3.40.50.970">
    <property type="match status" value="2"/>
</dbReference>
<dbReference type="Gene3D" id="3.40.50.1220">
    <property type="entry name" value="TPP-binding domain"/>
    <property type="match status" value="1"/>
</dbReference>
<dbReference type="HAMAP" id="MF_01659">
    <property type="entry name" value="MenD"/>
    <property type="match status" value="1"/>
</dbReference>
<dbReference type="InterPro" id="IPR004433">
    <property type="entry name" value="MenaQ_synth_MenD"/>
</dbReference>
<dbReference type="InterPro" id="IPR032264">
    <property type="entry name" value="MenD_middle"/>
</dbReference>
<dbReference type="InterPro" id="IPR029061">
    <property type="entry name" value="THDP-binding"/>
</dbReference>
<dbReference type="InterPro" id="IPR012001">
    <property type="entry name" value="Thiamin_PyroP_enz_TPP-bd_dom"/>
</dbReference>
<dbReference type="InterPro" id="IPR011766">
    <property type="entry name" value="TPP_enzyme_TPP-bd"/>
</dbReference>
<dbReference type="NCBIfam" id="TIGR00173">
    <property type="entry name" value="menD"/>
    <property type="match status" value="1"/>
</dbReference>
<dbReference type="PANTHER" id="PTHR42916">
    <property type="entry name" value="2-SUCCINYL-5-ENOLPYRUVYL-6-HYDROXY-3-CYCLOHEXENE-1-CARBOXYLATE SYNTHASE"/>
    <property type="match status" value="1"/>
</dbReference>
<dbReference type="PANTHER" id="PTHR42916:SF1">
    <property type="entry name" value="PROTEIN PHYLLO, CHLOROPLASTIC"/>
    <property type="match status" value="1"/>
</dbReference>
<dbReference type="Pfam" id="PF02775">
    <property type="entry name" value="TPP_enzyme_C"/>
    <property type="match status" value="1"/>
</dbReference>
<dbReference type="Pfam" id="PF16582">
    <property type="entry name" value="TPP_enzyme_M_2"/>
    <property type="match status" value="1"/>
</dbReference>
<dbReference type="Pfam" id="PF02776">
    <property type="entry name" value="TPP_enzyme_N"/>
    <property type="match status" value="1"/>
</dbReference>
<dbReference type="PIRSF" id="PIRSF004983">
    <property type="entry name" value="MenD"/>
    <property type="match status" value="1"/>
</dbReference>
<dbReference type="SUPFAM" id="SSF52518">
    <property type="entry name" value="Thiamin diphosphate-binding fold (THDP-binding)"/>
    <property type="match status" value="2"/>
</dbReference>
<reference key="1">
    <citation type="journal article" date="1996" name="FEMS Microbiol. Lett.">
        <title>A new isochorismate synthase specifically involved in menaquinone (vitamin K2) biosynthesis encoded by the menF gene.</title>
        <authorList>
            <person name="Daruwala R."/>
            <person name="Kwon O."/>
            <person name="Meganathan R."/>
            <person name="Hudspeth M.E.S."/>
        </authorList>
    </citation>
    <scope>NUCLEOTIDE SEQUENCE [GENOMIC DNA]</scope>
</reference>
<reference key="2">
    <citation type="journal article" date="1997" name="DNA Res.">
        <title>Construction of a contiguous 874-kb sequence of the Escherichia coli-K12 genome corresponding to 50.0-68.8 min on the linkage map and analysis of its sequence features.</title>
        <authorList>
            <person name="Yamamoto Y."/>
            <person name="Aiba H."/>
            <person name="Baba T."/>
            <person name="Hayashi K."/>
            <person name="Inada T."/>
            <person name="Isono K."/>
            <person name="Itoh T."/>
            <person name="Kimura S."/>
            <person name="Kitagawa M."/>
            <person name="Makino K."/>
            <person name="Miki T."/>
            <person name="Mitsuhashi N."/>
            <person name="Mizobuchi K."/>
            <person name="Mori H."/>
            <person name="Nakade S."/>
            <person name="Nakamura Y."/>
            <person name="Nashimoto H."/>
            <person name="Oshima T."/>
            <person name="Oyama S."/>
            <person name="Saito N."/>
            <person name="Sampei G."/>
            <person name="Satoh Y."/>
            <person name="Sivasundaram S."/>
            <person name="Tagami H."/>
            <person name="Takahashi H."/>
            <person name="Takeda J."/>
            <person name="Takemoto K."/>
            <person name="Uehara K."/>
            <person name="Wada C."/>
            <person name="Yamagata S."/>
            <person name="Horiuchi T."/>
        </authorList>
    </citation>
    <scope>NUCLEOTIDE SEQUENCE [LARGE SCALE GENOMIC DNA]</scope>
    <source>
        <strain>K12 / W3110 / ATCC 27325 / DSM 5911</strain>
    </source>
</reference>
<reference key="3">
    <citation type="journal article" date="1997" name="Science">
        <title>The complete genome sequence of Escherichia coli K-12.</title>
        <authorList>
            <person name="Blattner F.R."/>
            <person name="Plunkett G. III"/>
            <person name="Bloch C.A."/>
            <person name="Perna N.T."/>
            <person name="Burland V."/>
            <person name="Riley M."/>
            <person name="Collado-Vides J."/>
            <person name="Glasner J.D."/>
            <person name="Rode C.K."/>
            <person name="Mayhew G.F."/>
            <person name="Gregor J."/>
            <person name="Davis N.W."/>
            <person name="Kirkpatrick H.A."/>
            <person name="Goeden M.A."/>
            <person name="Rose D.J."/>
            <person name="Mau B."/>
            <person name="Shao Y."/>
        </authorList>
    </citation>
    <scope>NUCLEOTIDE SEQUENCE [LARGE SCALE GENOMIC DNA]</scope>
    <source>
        <strain>K12 / MG1655 / ATCC 47076</strain>
    </source>
</reference>
<reference key="4">
    <citation type="journal article" date="2006" name="Mol. Syst. Biol.">
        <title>Highly accurate genome sequences of Escherichia coli K-12 strains MG1655 and W3110.</title>
        <authorList>
            <person name="Hayashi K."/>
            <person name="Morooka N."/>
            <person name="Yamamoto Y."/>
            <person name="Fujita K."/>
            <person name="Isono K."/>
            <person name="Choi S."/>
            <person name="Ohtsubo E."/>
            <person name="Baba T."/>
            <person name="Wanner B.L."/>
            <person name="Mori H."/>
            <person name="Horiuchi T."/>
        </authorList>
    </citation>
    <scope>NUCLEOTIDE SEQUENCE [LARGE SCALE GENOMIC DNA]</scope>
    <source>
        <strain>K12 / W3110 / ATCC 27325 / DSM 5911</strain>
    </source>
</reference>
<reference key="5">
    <citation type="journal article" date="1989" name="J. Bacteriol.">
        <title>Sequence and overexpression of the menD gene from Escherichia coli.</title>
        <authorList>
            <person name="Popp J.L."/>
        </authorList>
    </citation>
    <scope>NUCLEOTIDE SEQUENCE [GENOMIC DNA] OF 1-507</scope>
</reference>
<reference key="6">
    <citation type="submission" date="1994-07" db="EMBL/GenBank/DDBJ databases">
        <authorList>
            <person name="Sharma V."/>
            <person name="Hudspeth M.E."/>
            <person name="Meganathan R."/>
        </authorList>
    </citation>
    <scope>NUCLEOTIDE SEQUENCE [GENOMIC DNA] OF 536-556</scope>
    <source>
        <strain>K12</strain>
    </source>
</reference>
<reference key="7">
    <citation type="journal article" date="1992" name="J. Bacteriol.">
        <title>Menaquinone (vitamin K2) biosynthesis: evidence that the Escherichia coli menD gene encodes both 2-succinyl-6-hydroxy-2,4-cyclohexadiene-1-carboxylic acid synthase and alpha-ketoglutarate decarboxylase activities.</title>
        <authorList>
            <person name="Palaniappan C."/>
            <person name="Sharma V."/>
            <person name="Hudspeth M.E."/>
            <person name="Meganathan R."/>
        </authorList>
    </citation>
    <scope>INDUCTION</scope>
    <scope>PRELIMINARY FUNCTION</scope>
    <source>
        <strain>K12</strain>
    </source>
</reference>
<reference key="8">
    <citation type="journal article" date="2003" name="Biochemistry">
        <title>Steady-state kinetics and molecular evolution of Escherichia coli MenD [(1R,6R)-2-succinyl-6-hydroxy-2,4-cyclohexadiene-1-carboxylate synthase], an anomalous thiamin diphosphate-dependent decarboxylase-carboligase.</title>
        <authorList>
            <person name="Bhasin M."/>
            <person name="Billinsky J.L."/>
            <person name="Palmer D.R.J."/>
        </authorList>
    </citation>
    <scope>SUBUNIT</scope>
    <scope>COFACTOR</scope>
    <scope>MUTAGENESIS OF GLU-55</scope>
    <scope>BIOPHYSICOCHEMICAL PROPERTIES</scope>
</reference>
<reference key="9">
    <citation type="journal article" date="2005" name="Acta Crystallogr. F">
        <title>Crystallization and preliminary X-ray analysis of (1R,6R)-2-succinyl-6-hydroxy-2,4-cyclohexadiene-1-carboxylate (SHCHC) synthase (MenD) from Escherichia coli.</title>
        <authorList>
            <person name="Sieminska E.A.L."/>
            <person name="Macova A."/>
            <person name="Palmer D.R.J."/>
            <person name="Sanders D.A.R."/>
        </authorList>
    </citation>
    <scope>CRYSTALLIZATION</scope>
    <scope>COFACTOR</scope>
    <scope>SUBUNIT</scope>
</reference>
<reference key="10">
    <citation type="journal article" date="2007" name="Biochemistry">
        <title>Menaquinone biosynthesis in Escherichia coli: identification of 2-succinyl-5-enolpyruvyl-6-hydroxy-3-cyclohexene-1-carboxylate as a novel intermediate and re-evaluation of MenD activity.</title>
        <authorList>
            <person name="Jiang M."/>
            <person name="Cao Y."/>
            <person name="Guo Z.-F."/>
            <person name="Chen M."/>
            <person name="Chen X."/>
            <person name="Guo Z."/>
        </authorList>
    </citation>
    <scope>FUNCTION AS A SEPHCHC SYNTHASE</scope>
    <scope>CATALYTIC ACTIVITY</scope>
    <scope>COFACTOR</scope>
    <scope>BIOPHYSICOCHEMICAL PROPERTIES</scope>
</reference>
<sequence length="556" mass="61367">MSVSAFNRRWAAVILEALTRHGVRHICIAPGSRSTPLTLAAAENSAFIHHTHFDERGLGHLALGLAKVSKQPVAVIVTSGTAVANLYPALIEAGLTGEKLILLTADRPPELIDCGANQAIRQPGMFASHPTHSISLPRPTQDIPARWLVSTIDHALGTLHAGGVHINCPFAEPLYGEMDDTGLSWQQRLGDWWQDDKPWLREAPRLESEKQRDWFFWRQKRGVVVAGRMSAEEGKKVALWAQTLGWPLIGDVLSQTGQPLPCADLWLGNAKATSELQQAQIVVQLGSSLTGKRLLQWQASCEPEEYWIVDDIEGRLDPAHHRGRRLIANIADWLELHPAEKRQPWCVEIPRLAEQAMQAVIARRDAFGEAQLAHRICDYLPEQGQLFVGNSLVVRLIDALSQLPAGYPVYSNRGASGIDGLLSTAAGVQRASGKPTLAIVGDLSALYDLNALALLRQVSAPLVLIVVNNNGGQIFSLLPTPQSERERFYLMPQNVHFEHAAAMFELKYHRPQNWQELETAFADAWRTPTTTVIEMVVNDTDGAQTLQQLLAQVSHL</sequence>
<gene>
    <name evidence="1" type="primary">menD</name>
    <name type="ordered locus">b2264</name>
    <name type="ordered locus">JW5374</name>
</gene>
<comment type="function">
    <text evidence="1 5">Catalyzes the thiamine diphosphate-dependent decarboxylation of 2-oxoglutarate and the subsequent addition of the resulting succinic semialdehyde-thiamine pyrophosphate anion to isochorismate to yield 2-succinyl-5-enolpyruvyl-6-hydroxy-3-cyclohexene-1-carboxylate (SEPHCHC).</text>
</comment>
<comment type="catalytic activity">
    <reaction evidence="1 5">
        <text>isochorismate + 2-oxoglutarate + H(+) = 5-enolpyruvoyl-6-hydroxy-2-succinyl-cyclohex-3-ene-1-carboxylate + CO2</text>
        <dbReference type="Rhea" id="RHEA:25593"/>
        <dbReference type="ChEBI" id="CHEBI:15378"/>
        <dbReference type="ChEBI" id="CHEBI:16526"/>
        <dbReference type="ChEBI" id="CHEBI:16810"/>
        <dbReference type="ChEBI" id="CHEBI:29780"/>
        <dbReference type="ChEBI" id="CHEBI:58818"/>
        <dbReference type="EC" id="2.2.1.9"/>
    </reaction>
</comment>
<comment type="cofactor">
    <cofactor evidence="1">
        <name>Mg(2+)</name>
        <dbReference type="ChEBI" id="CHEBI:18420"/>
    </cofactor>
    <cofactor evidence="1">
        <name>Mn(2+)</name>
        <dbReference type="ChEBI" id="CHEBI:29035"/>
    </cofactor>
</comment>
<comment type="cofactor">
    <cofactor evidence="1">
        <name>thiamine diphosphate</name>
        <dbReference type="ChEBI" id="CHEBI:58937"/>
    </cofactor>
    <text evidence="1">Binds 1 thiamine pyrophosphate per subunit.</text>
</comment>
<comment type="biophysicochemical properties">
    <kinetics>
        <KM evidence="3 5">53 nM for isochorismate (at 22.5 degrees Celsius and pH 7.8)</KM>
        <KM evidence="3 5">1.5 uM for 2-oxoglutarate (at 22.5 degrees Celsius and pH 7.8)</KM>
        <KM evidence="3 5">2.4 uM for thiamine diphosphate (at 22.5 degrees Celsius and pH 7.8)</KM>
        <KM evidence="3 5">80 uM for magnesium ions (at 22.5 degrees Celsius and pH 7.8)</KM>
    </kinetics>
    <phDependence>
        <text evidence="3 5">Optimum pH is 7-8.</text>
    </phDependence>
</comment>
<comment type="pathway">
    <text evidence="1">Quinol/quinone metabolism; 1,4-dihydroxy-2-naphthoate biosynthesis; 1,4-dihydroxy-2-naphthoate from chorismate: step 2/7.</text>
</comment>
<comment type="pathway">
    <text evidence="1">Quinol/quinone metabolism; menaquinone biosynthesis.</text>
</comment>
<comment type="subunit">
    <text evidence="1 3 4">Homodimer.</text>
</comment>
<comment type="induction">
    <text evidence="2">By isopropyl-beta-D-thiogalactoside (IPTG).</text>
</comment>
<comment type="similarity">
    <text evidence="1 6">Belongs to the TPP enzyme family. MenD subfamily.</text>
</comment>
<comment type="caution">
    <text evidence="7">Was originally thought (PubMed:1459959, PubMed:14621995, PubMed:16511076) to be a 2-succinyl-6-hydroxy-2,4-cyclohexadiene-1-carboxylate (SHCHC) synthase but further protein analysis clearly suggests that it is a 2-succinyl-5-enolpyruvyl-6-hydroxy-3-cyclohexene-1-carboxylate (SEPHCHC) synthase.</text>
</comment>
<comment type="sequence caution" evidence="6">
    <conflict type="frameshift">
        <sequence resource="EMBL-CDS" id="AAA24153"/>
    </conflict>
</comment>
<proteinExistence type="evidence at protein level"/>
<evidence type="ECO:0000255" key="1">
    <source>
        <dbReference type="HAMAP-Rule" id="MF_01659"/>
    </source>
</evidence>
<evidence type="ECO:0000269" key="2">
    <source>
    </source>
</evidence>
<evidence type="ECO:0000269" key="3">
    <source>
    </source>
</evidence>
<evidence type="ECO:0000269" key="4">
    <source>
    </source>
</evidence>
<evidence type="ECO:0000269" key="5">
    <source>
    </source>
</evidence>
<evidence type="ECO:0000305" key="6"/>
<evidence type="ECO:0000305" key="7">
    <source>
    </source>
</evidence>
<evidence type="ECO:0007829" key="8">
    <source>
        <dbReference type="PDB" id="2JLC"/>
    </source>
</evidence>
<evidence type="ECO:0007829" key="9">
    <source>
        <dbReference type="PDB" id="3FLM"/>
    </source>
</evidence>
<evidence type="ECO:0007829" key="10">
    <source>
        <dbReference type="PDB" id="5EJ8"/>
    </source>
</evidence>
<evidence type="ECO:0007829" key="11">
    <source>
        <dbReference type="PDB" id="5EJ9"/>
    </source>
</evidence>
<protein>
    <recommendedName>
        <fullName evidence="1">2-succinyl-5-enolpyruvyl-6-hydroxy-3-cyclohexene-1-carboxylate synthase</fullName>
        <shortName evidence="1">SEPHCHC synthase</shortName>
        <ecNumber evidence="1">2.2.1.9</ecNumber>
    </recommendedName>
    <alternativeName>
        <fullName evidence="1">Menaquinone biosynthesis protein MenD</fullName>
    </alternativeName>
</protein>
<keyword id="KW-0002">3D-structure</keyword>
<keyword id="KW-0460">Magnesium</keyword>
<keyword id="KW-0464">Manganese</keyword>
<keyword id="KW-0474">Menaquinone biosynthesis</keyword>
<keyword id="KW-0479">Metal-binding</keyword>
<keyword id="KW-1185">Reference proteome</keyword>
<keyword id="KW-0786">Thiamine pyrophosphate</keyword>
<keyword id="KW-0808">Transferase</keyword>
<name>MEND_ECOLI</name>